<feature type="chain" id="PRO_0000258481" description="Large ribosomal subunit protein bL9">
    <location>
        <begin position="1"/>
        <end position="151"/>
    </location>
</feature>
<dbReference type="EMBL" id="CP000431">
    <property type="protein sequence ID" value="ABG95232.1"/>
    <property type="molecule type" value="Genomic_DNA"/>
</dbReference>
<dbReference type="RefSeq" id="WP_009476433.1">
    <property type="nucleotide sequence ID" value="NC_008268.1"/>
</dbReference>
<dbReference type="SMR" id="Q0SB54"/>
<dbReference type="KEGG" id="rha:RHA1_ro03429"/>
<dbReference type="eggNOG" id="COG0359">
    <property type="taxonomic scope" value="Bacteria"/>
</dbReference>
<dbReference type="HOGENOM" id="CLU_078938_5_1_11"/>
<dbReference type="OrthoDB" id="9788336at2"/>
<dbReference type="Proteomes" id="UP000008710">
    <property type="component" value="Chromosome"/>
</dbReference>
<dbReference type="GO" id="GO:1990904">
    <property type="term" value="C:ribonucleoprotein complex"/>
    <property type="evidence" value="ECO:0007669"/>
    <property type="project" value="UniProtKB-KW"/>
</dbReference>
<dbReference type="GO" id="GO:0005840">
    <property type="term" value="C:ribosome"/>
    <property type="evidence" value="ECO:0007669"/>
    <property type="project" value="UniProtKB-KW"/>
</dbReference>
<dbReference type="GO" id="GO:0019843">
    <property type="term" value="F:rRNA binding"/>
    <property type="evidence" value="ECO:0007669"/>
    <property type="project" value="UniProtKB-UniRule"/>
</dbReference>
<dbReference type="GO" id="GO:0003735">
    <property type="term" value="F:structural constituent of ribosome"/>
    <property type="evidence" value="ECO:0007669"/>
    <property type="project" value="InterPro"/>
</dbReference>
<dbReference type="GO" id="GO:0006412">
    <property type="term" value="P:translation"/>
    <property type="evidence" value="ECO:0007669"/>
    <property type="project" value="UniProtKB-UniRule"/>
</dbReference>
<dbReference type="FunFam" id="3.40.5.10:FF:000003">
    <property type="entry name" value="50S ribosomal protein L9"/>
    <property type="match status" value="1"/>
</dbReference>
<dbReference type="Gene3D" id="3.10.430.100">
    <property type="entry name" value="Ribosomal protein L9, C-terminal domain"/>
    <property type="match status" value="1"/>
</dbReference>
<dbReference type="Gene3D" id="3.40.5.10">
    <property type="entry name" value="Ribosomal protein L9, N-terminal domain"/>
    <property type="match status" value="1"/>
</dbReference>
<dbReference type="HAMAP" id="MF_00503">
    <property type="entry name" value="Ribosomal_bL9"/>
    <property type="match status" value="1"/>
</dbReference>
<dbReference type="InterPro" id="IPR000244">
    <property type="entry name" value="Ribosomal_bL9"/>
</dbReference>
<dbReference type="InterPro" id="IPR009027">
    <property type="entry name" value="Ribosomal_bL9/RNase_H1_N"/>
</dbReference>
<dbReference type="InterPro" id="IPR020594">
    <property type="entry name" value="Ribosomal_bL9_bac/chp"/>
</dbReference>
<dbReference type="InterPro" id="IPR020069">
    <property type="entry name" value="Ribosomal_bL9_C"/>
</dbReference>
<dbReference type="InterPro" id="IPR036791">
    <property type="entry name" value="Ribosomal_bL9_C_sf"/>
</dbReference>
<dbReference type="InterPro" id="IPR020070">
    <property type="entry name" value="Ribosomal_bL9_N"/>
</dbReference>
<dbReference type="InterPro" id="IPR036935">
    <property type="entry name" value="Ribosomal_bL9_N_sf"/>
</dbReference>
<dbReference type="NCBIfam" id="TIGR00158">
    <property type="entry name" value="L9"/>
    <property type="match status" value="1"/>
</dbReference>
<dbReference type="PANTHER" id="PTHR21368">
    <property type="entry name" value="50S RIBOSOMAL PROTEIN L9"/>
    <property type="match status" value="1"/>
</dbReference>
<dbReference type="Pfam" id="PF03948">
    <property type="entry name" value="Ribosomal_L9_C"/>
    <property type="match status" value="1"/>
</dbReference>
<dbReference type="Pfam" id="PF01281">
    <property type="entry name" value="Ribosomal_L9_N"/>
    <property type="match status" value="1"/>
</dbReference>
<dbReference type="SUPFAM" id="SSF55658">
    <property type="entry name" value="L9 N-domain-like"/>
    <property type="match status" value="1"/>
</dbReference>
<dbReference type="SUPFAM" id="SSF55653">
    <property type="entry name" value="Ribosomal protein L9 C-domain"/>
    <property type="match status" value="1"/>
</dbReference>
<dbReference type="PROSITE" id="PS00651">
    <property type="entry name" value="RIBOSOMAL_L9"/>
    <property type="match status" value="1"/>
</dbReference>
<protein>
    <recommendedName>
        <fullName evidence="1">Large ribosomal subunit protein bL9</fullName>
    </recommendedName>
    <alternativeName>
        <fullName evidence="2">50S ribosomal protein L9</fullName>
    </alternativeName>
</protein>
<sequence length="151" mass="15758">MKLILTADVDNLGAPGDTVEVKDGYGRNYLLPRGLAIVATRGAEKQVEGIRRAQEARAVRGLDHAKELKDAIEGLENISLSVKTAGDSGKLFGSVTAADVAGAIKAAGGPVVDKRNLELPKAHIKATGKHAIVVNLHPDVVAKFHLNVVGA</sequence>
<accession>Q0SB54</accession>
<comment type="function">
    <text evidence="1">Binds to the 23S rRNA.</text>
</comment>
<comment type="similarity">
    <text evidence="1">Belongs to the bacterial ribosomal protein bL9 family.</text>
</comment>
<keyword id="KW-0687">Ribonucleoprotein</keyword>
<keyword id="KW-0689">Ribosomal protein</keyword>
<keyword id="KW-0694">RNA-binding</keyword>
<keyword id="KW-0699">rRNA-binding</keyword>
<reference key="1">
    <citation type="journal article" date="2006" name="Proc. Natl. Acad. Sci. U.S.A.">
        <title>The complete genome of Rhodococcus sp. RHA1 provides insights into a catabolic powerhouse.</title>
        <authorList>
            <person name="McLeod M.P."/>
            <person name="Warren R.L."/>
            <person name="Hsiao W.W.L."/>
            <person name="Araki N."/>
            <person name="Myhre M."/>
            <person name="Fernandes C."/>
            <person name="Miyazawa D."/>
            <person name="Wong W."/>
            <person name="Lillquist A.L."/>
            <person name="Wang D."/>
            <person name="Dosanjh M."/>
            <person name="Hara H."/>
            <person name="Petrescu A."/>
            <person name="Morin R.D."/>
            <person name="Yang G."/>
            <person name="Stott J.M."/>
            <person name="Schein J.E."/>
            <person name="Shin H."/>
            <person name="Smailus D."/>
            <person name="Siddiqui A.S."/>
            <person name="Marra M.A."/>
            <person name="Jones S.J.M."/>
            <person name="Holt R."/>
            <person name="Brinkman F.S.L."/>
            <person name="Miyauchi K."/>
            <person name="Fukuda M."/>
            <person name="Davies J.E."/>
            <person name="Mohn W.W."/>
            <person name="Eltis L.D."/>
        </authorList>
    </citation>
    <scope>NUCLEOTIDE SEQUENCE [LARGE SCALE GENOMIC DNA]</scope>
    <source>
        <strain>RHA1</strain>
    </source>
</reference>
<proteinExistence type="inferred from homology"/>
<evidence type="ECO:0000255" key="1">
    <source>
        <dbReference type="HAMAP-Rule" id="MF_00503"/>
    </source>
</evidence>
<evidence type="ECO:0000305" key="2"/>
<gene>
    <name evidence="1" type="primary">rplI</name>
    <name type="ordered locus">RHA1_ro03429</name>
</gene>
<organism>
    <name type="scientific">Rhodococcus jostii (strain RHA1)</name>
    <dbReference type="NCBI Taxonomy" id="101510"/>
    <lineage>
        <taxon>Bacteria</taxon>
        <taxon>Bacillati</taxon>
        <taxon>Actinomycetota</taxon>
        <taxon>Actinomycetes</taxon>
        <taxon>Mycobacteriales</taxon>
        <taxon>Nocardiaceae</taxon>
        <taxon>Rhodococcus</taxon>
    </lineage>
</organism>
<name>RL9_RHOJR</name>